<dbReference type="EMBL" id="FM178379">
    <property type="protein sequence ID" value="CAQ80275.1"/>
    <property type="molecule type" value="Genomic_DNA"/>
</dbReference>
<dbReference type="RefSeq" id="WP_012551060.1">
    <property type="nucleotide sequence ID" value="NC_011312.1"/>
</dbReference>
<dbReference type="KEGG" id="vsa:VSAL_I2591"/>
<dbReference type="eggNOG" id="COG3112">
    <property type="taxonomic scope" value="Bacteria"/>
</dbReference>
<dbReference type="HOGENOM" id="CLU_139226_0_0_6"/>
<dbReference type="Proteomes" id="UP000001730">
    <property type="component" value="Chromosome 1"/>
</dbReference>
<dbReference type="HAMAP" id="MF_01053">
    <property type="entry name" value="UPF0231"/>
    <property type="match status" value="1"/>
</dbReference>
<dbReference type="InterPro" id="IPR008249">
    <property type="entry name" value="UPF0231"/>
</dbReference>
<dbReference type="NCBIfam" id="NF003578">
    <property type="entry name" value="PRK05248.2-3"/>
    <property type="match status" value="1"/>
</dbReference>
<dbReference type="Pfam" id="PF06062">
    <property type="entry name" value="UPF0231"/>
    <property type="match status" value="1"/>
</dbReference>
<dbReference type="PIRSF" id="PIRSF006287">
    <property type="entry name" value="UCP006287"/>
    <property type="match status" value="1"/>
</dbReference>
<protein>
    <recommendedName>
        <fullName evidence="1">UPF0231 protein VSAL_I2591</fullName>
    </recommendedName>
</protein>
<proteinExistence type="inferred from homology"/>
<gene>
    <name type="ordered locus">VSAL_I2591</name>
</gene>
<comment type="similarity">
    <text evidence="1">Belongs to the UPF0231 family.</text>
</comment>
<evidence type="ECO:0000255" key="1">
    <source>
        <dbReference type="HAMAP-Rule" id="MF_01053"/>
    </source>
</evidence>
<organism>
    <name type="scientific">Aliivibrio salmonicida (strain LFI1238)</name>
    <name type="common">Vibrio salmonicida (strain LFI1238)</name>
    <dbReference type="NCBI Taxonomy" id="316275"/>
    <lineage>
        <taxon>Bacteria</taxon>
        <taxon>Pseudomonadati</taxon>
        <taxon>Pseudomonadota</taxon>
        <taxon>Gammaproteobacteria</taxon>
        <taxon>Vibrionales</taxon>
        <taxon>Vibrionaceae</taxon>
        <taxon>Aliivibrio</taxon>
    </lineage>
</organism>
<feature type="chain" id="PRO_1000136288" description="UPF0231 protein VSAL_I2591">
    <location>
        <begin position="1"/>
        <end position="122"/>
    </location>
</feature>
<sequence length="122" mass="14299">MDYEFKKNTLDGTYHANFSMGHEAMGRWLVEDVAKDTELLAELYKQIAAVKNTQDEWKLSGKVMTLVLTDQEVIVQENALFENSEEEFEEDIHIYDDECISVCGLEDFETMLQSWEAFIRRF</sequence>
<reference key="1">
    <citation type="journal article" date="2008" name="BMC Genomics">
        <title>The genome sequence of the fish pathogen Aliivibrio salmonicida strain LFI1238 shows extensive evidence of gene decay.</title>
        <authorList>
            <person name="Hjerde E."/>
            <person name="Lorentzen M.S."/>
            <person name="Holden M.T."/>
            <person name="Seeger K."/>
            <person name="Paulsen S."/>
            <person name="Bason N."/>
            <person name="Churcher C."/>
            <person name="Harris D."/>
            <person name="Norbertczak H."/>
            <person name="Quail M.A."/>
            <person name="Sanders S."/>
            <person name="Thurston S."/>
            <person name="Parkhill J."/>
            <person name="Willassen N.P."/>
            <person name="Thomson N.R."/>
        </authorList>
    </citation>
    <scope>NUCLEOTIDE SEQUENCE [LARGE SCALE GENOMIC DNA]</scope>
    <source>
        <strain>LFI1238</strain>
    </source>
</reference>
<accession>B6EL23</accession>
<name>Y2591_ALISL</name>